<sequence length="396" mass="42779">MSEYSLFTSESVSEGHPDKIADQISDAVLDAIIAQDKYARVACETLVKTGVAIIAGEVTTSAWVDLEDLVRKVIIDIGYNSSDVGFDGATCAVMNIIGKQSVDIAQGVDRSKPEDQGAGDQGLMFGYASNETEVLMPAPICFSHRLVERQAEARKSGLLPWLRPDAKSQVTCRYENGKVVGIDAVVLSTQHNPEVSQKDLQEAVMELIVKHTLPAELLHKGTQYHINPTGNFIIGGPVGDCGLTGRKIIVDSYGGMARHGGGAFSGKDPSKVDRSAAYAGRYVAKNIVAAGLAERCEIQVSYAIGVAQPTSISINTFGTGKVSDDKIIQLVRECFDLRPYAITTMLDLLHPMYQETAAYGHFGRTPQQKTVGDDTFTTFTWERTDRAQSLRDAAGL</sequence>
<name>METK_PSEPK</name>
<reference key="1">
    <citation type="journal article" date="2002" name="Environ. Microbiol.">
        <title>Complete genome sequence and comparative analysis of the metabolically versatile Pseudomonas putida KT2440.</title>
        <authorList>
            <person name="Nelson K.E."/>
            <person name="Weinel C."/>
            <person name="Paulsen I.T."/>
            <person name="Dodson R.J."/>
            <person name="Hilbert H."/>
            <person name="Martins dos Santos V.A.P."/>
            <person name="Fouts D.E."/>
            <person name="Gill S.R."/>
            <person name="Pop M."/>
            <person name="Holmes M."/>
            <person name="Brinkac L.M."/>
            <person name="Beanan M.J."/>
            <person name="DeBoy R.T."/>
            <person name="Daugherty S.C."/>
            <person name="Kolonay J.F."/>
            <person name="Madupu R."/>
            <person name="Nelson W.C."/>
            <person name="White O."/>
            <person name="Peterson J.D."/>
            <person name="Khouri H.M."/>
            <person name="Hance I."/>
            <person name="Chris Lee P."/>
            <person name="Holtzapple E.K."/>
            <person name="Scanlan D."/>
            <person name="Tran K."/>
            <person name="Moazzez A."/>
            <person name="Utterback T.R."/>
            <person name="Rizzo M."/>
            <person name="Lee K."/>
            <person name="Kosack D."/>
            <person name="Moestl D."/>
            <person name="Wedler H."/>
            <person name="Lauber J."/>
            <person name="Stjepandic D."/>
            <person name="Hoheisel J."/>
            <person name="Straetz M."/>
            <person name="Heim S."/>
            <person name="Kiewitz C."/>
            <person name="Eisen J.A."/>
            <person name="Timmis K.N."/>
            <person name="Duesterhoeft A."/>
            <person name="Tuemmler B."/>
            <person name="Fraser C.M."/>
        </authorList>
    </citation>
    <scope>NUCLEOTIDE SEQUENCE [LARGE SCALE GENOMIC DNA]</scope>
    <source>
        <strain>ATCC 47054 / DSM 6125 / CFBP 8728 / NCIMB 11950 / KT2440</strain>
    </source>
</reference>
<keyword id="KW-0067">ATP-binding</keyword>
<keyword id="KW-0963">Cytoplasm</keyword>
<keyword id="KW-0460">Magnesium</keyword>
<keyword id="KW-0479">Metal-binding</keyword>
<keyword id="KW-0547">Nucleotide-binding</keyword>
<keyword id="KW-0554">One-carbon metabolism</keyword>
<keyword id="KW-0630">Potassium</keyword>
<keyword id="KW-1185">Reference proteome</keyword>
<keyword id="KW-0808">Transferase</keyword>
<protein>
    <recommendedName>
        <fullName evidence="1">S-adenosylmethionine synthase</fullName>
        <shortName evidence="1">AdoMet synthase</shortName>
        <ecNumber evidence="1">2.5.1.6</ecNumber>
    </recommendedName>
    <alternativeName>
        <fullName evidence="1">MAT</fullName>
    </alternativeName>
    <alternativeName>
        <fullName evidence="1">Methionine adenosyltransferase</fullName>
    </alternativeName>
</protein>
<proteinExistence type="inferred from homology"/>
<comment type="function">
    <text evidence="1">Catalyzes the formation of S-adenosylmethionine (AdoMet) from methionine and ATP. The overall synthetic reaction is composed of two sequential steps, AdoMet formation and the subsequent tripolyphosphate hydrolysis which occurs prior to release of AdoMet from the enzyme.</text>
</comment>
<comment type="catalytic activity">
    <reaction evidence="1">
        <text>L-methionine + ATP + H2O = S-adenosyl-L-methionine + phosphate + diphosphate</text>
        <dbReference type="Rhea" id="RHEA:21080"/>
        <dbReference type="ChEBI" id="CHEBI:15377"/>
        <dbReference type="ChEBI" id="CHEBI:30616"/>
        <dbReference type="ChEBI" id="CHEBI:33019"/>
        <dbReference type="ChEBI" id="CHEBI:43474"/>
        <dbReference type="ChEBI" id="CHEBI:57844"/>
        <dbReference type="ChEBI" id="CHEBI:59789"/>
        <dbReference type="EC" id="2.5.1.6"/>
    </reaction>
</comment>
<comment type="cofactor">
    <cofactor evidence="1">
        <name>Mg(2+)</name>
        <dbReference type="ChEBI" id="CHEBI:18420"/>
    </cofactor>
    <text evidence="1">Binds 2 divalent ions per subunit.</text>
</comment>
<comment type="cofactor">
    <cofactor evidence="1">
        <name>K(+)</name>
        <dbReference type="ChEBI" id="CHEBI:29103"/>
    </cofactor>
    <text evidence="1">Binds 1 potassium ion per subunit.</text>
</comment>
<comment type="pathway">
    <text evidence="1">Amino-acid biosynthesis; S-adenosyl-L-methionine biosynthesis; S-adenosyl-L-methionine from L-methionine: step 1/1.</text>
</comment>
<comment type="subunit">
    <text evidence="1">Homotetramer; dimer of dimers.</text>
</comment>
<comment type="subcellular location">
    <subcellularLocation>
        <location evidence="1">Cytoplasm</location>
    </subcellularLocation>
</comment>
<comment type="similarity">
    <text evidence="1">Belongs to the AdoMet synthase family.</text>
</comment>
<organism>
    <name type="scientific">Pseudomonas putida (strain ATCC 47054 / DSM 6125 / CFBP 8728 / NCIMB 11950 / KT2440)</name>
    <dbReference type="NCBI Taxonomy" id="160488"/>
    <lineage>
        <taxon>Bacteria</taxon>
        <taxon>Pseudomonadati</taxon>
        <taxon>Pseudomonadota</taxon>
        <taxon>Gammaproteobacteria</taxon>
        <taxon>Pseudomonadales</taxon>
        <taxon>Pseudomonadaceae</taxon>
        <taxon>Pseudomonas</taxon>
    </lineage>
</organism>
<dbReference type="EC" id="2.5.1.6" evidence="1"/>
<dbReference type="EMBL" id="AE015451">
    <property type="protein sequence ID" value="AAN70534.1"/>
    <property type="molecule type" value="Genomic_DNA"/>
</dbReference>
<dbReference type="RefSeq" id="NP_747070.1">
    <property type="nucleotide sequence ID" value="NC_002947.4"/>
</dbReference>
<dbReference type="RefSeq" id="WP_003249375.1">
    <property type="nucleotide sequence ID" value="NZ_CP169744.1"/>
</dbReference>
<dbReference type="SMR" id="Q88D60"/>
<dbReference type="STRING" id="160488.PP_4967"/>
<dbReference type="PaxDb" id="160488-PP_4967"/>
<dbReference type="GeneID" id="83682701"/>
<dbReference type="KEGG" id="ppu:PP_4967"/>
<dbReference type="PATRIC" id="fig|160488.4.peg.5304"/>
<dbReference type="eggNOG" id="COG0192">
    <property type="taxonomic scope" value="Bacteria"/>
</dbReference>
<dbReference type="HOGENOM" id="CLU_041802_1_1_6"/>
<dbReference type="OrthoDB" id="9801686at2"/>
<dbReference type="PhylomeDB" id="Q88D60"/>
<dbReference type="BioCyc" id="PPUT160488:G1G01-5311-MONOMER"/>
<dbReference type="UniPathway" id="UPA00315">
    <property type="reaction ID" value="UER00080"/>
</dbReference>
<dbReference type="Proteomes" id="UP000000556">
    <property type="component" value="Chromosome"/>
</dbReference>
<dbReference type="GO" id="GO:0005737">
    <property type="term" value="C:cytoplasm"/>
    <property type="evidence" value="ECO:0007669"/>
    <property type="project" value="UniProtKB-SubCell"/>
</dbReference>
<dbReference type="GO" id="GO:0005524">
    <property type="term" value="F:ATP binding"/>
    <property type="evidence" value="ECO:0007669"/>
    <property type="project" value="UniProtKB-UniRule"/>
</dbReference>
<dbReference type="GO" id="GO:0000287">
    <property type="term" value="F:magnesium ion binding"/>
    <property type="evidence" value="ECO:0007669"/>
    <property type="project" value="UniProtKB-UniRule"/>
</dbReference>
<dbReference type="GO" id="GO:0004478">
    <property type="term" value="F:methionine adenosyltransferase activity"/>
    <property type="evidence" value="ECO:0007669"/>
    <property type="project" value="UniProtKB-UniRule"/>
</dbReference>
<dbReference type="GO" id="GO:0006730">
    <property type="term" value="P:one-carbon metabolic process"/>
    <property type="evidence" value="ECO:0007669"/>
    <property type="project" value="UniProtKB-KW"/>
</dbReference>
<dbReference type="GO" id="GO:0006556">
    <property type="term" value="P:S-adenosylmethionine biosynthetic process"/>
    <property type="evidence" value="ECO:0007669"/>
    <property type="project" value="UniProtKB-UniRule"/>
</dbReference>
<dbReference type="CDD" id="cd18079">
    <property type="entry name" value="S-AdoMet_synt"/>
    <property type="match status" value="1"/>
</dbReference>
<dbReference type="FunFam" id="3.30.300.10:FF:000003">
    <property type="entry name" value="S-adenosylmethionine synthase"/>
    <property type="match status" value="1"/>
</dbReference>
<dbReference type="Gene3D" id="3.30.300.10">
    <property type="match status" value="3"/>
</dbReference>
<dbReference type="HAMAP" id="MF_00086">
    <property type="entry name" value="S_AdoMet_synth1"/>
    <property type="match status" value="1"/>
</dbReference>
<dbReference type="InterPro" id="IPR022631">
    <property type="entry name" value="ADOMET_SYNTHASE_CS"/>
</dbReference>
<dbReference type="InterPro" id="IPR022630">
    <property type="entry name" value="S-AdoMet_synt_C"/>
</dbReference>
<dbReference type="InterPro" id="IPR022629">
    <property type="entry name" value="S-AdoMet_synt_central"/>
</dbReference>
<dbReference type="InterPro" id="IPR022628">
    <property type="entry name" value="S-AdoMet_synt_N"/>
</dbReference>
<dbReference type="InterPro" id="IPR002133">
    <property type="entry name" value="S-AdoMet_synthetase"/>
</dbReference>
<dbReference type="InterPro" id="IPR022636">
    <property type="entry name" value="S-AdoMet_synthetase_sfam"/>
</dbReference>
<dbReference type="NCBIfam" id="TIGR01034">
    <property type="entry name" value="metK"/>
    <property type="match status" value="1"/>
</dbReference>
<dbReference type="PANTHER" id="PTHR11964">
    <property type="entry name" value="S-ADENOSYLMETHIONINE SYNTHETASE"/>
    <property type="match status" value="1"/>
</dbReference>
<dbReference type="Pfam" id="PF02773">
    <property type="entry name" value="S-AdoMet_synt_C"/>
    <property type="match status" value="1"/>
</dbReference>
<dbReference type="Pfam" id="PF02772">
    <property type="entry name" value="S-AdoMet_synt_M"/>
    <property type="match status" value="1"/>
</dbReference>
<dbReference type="Pfam" id="PF00438">
    <property type="entry name" value="S-AdoMet_synt_N"/>
    <property type="match status" value="1"/>
</dbReference>
<dbReference type="PIRSF" id="PIRSF000497">
    <property type="entry name" value="MAT"/>
    <property type="match status" value="1"/>
</dbReference>
<dbReference type="SUPFAM" id="SSF55973">
    <property type="entry name" value="S-adenosylmethionine synthetase"/>
    <property type="match status" value="3"/>
</dbReference>
<dbReference type="PROSITE" id="PS00376">
    <property type="entry name" value="ADOMET_SYNTHASE_1"/>
    <property type="match status" value="1"/>
</dbReference>
<dbReference type="PROSITE" id="PS00377">
    <property type="entry name" value="ADOMET_SYNTHASE_2"/>
    <property type="match status" value="1"/>
</dbReference>
<feature type="chain" id="PRO_0000174573" description="S-adenosylmethionine synthase">
    <location>
        <begin position="1"/>
        <end position="396"/>
    </location>
</feature>
<feature type="region of interest" description="Flexible loop" evidence="1">
    <location>
        <begin position="100"/>
        <end position="110"/>
    </location>
</feature>
<feature type="binding site" description="in other chain" evidence="1">
    <location>
        <position position="16"/>
    </location>
    <ligand>
        <name>ATP</name>
        <dbReference type="ChEBI" id="CHEBI:30616"/>
        <note>ligand shared between two neighboring subunits</note>
    </ligand>
</feature>
<feature type="binding site" evidence="1">
    <location>
        <position position="18"/>
    </location>
    <ligand>
        <name>Mg(2+)</name>
        <dbReference type="ChEBI" id="CHEBI:18420"/>
    </ligand>
</feature>
<feature type="binding site" evidence="1">
    <location>
        <position position="44"/>
    </location>
    <ligand>
        <name>K(+)</name>
        <dbReference type="ChEBI" id="CHEBI:29103"/>
    </ligand>
</feature>
<feature type="binding site" description="in other chain" evidence="1">
    <location>
        <position position="57"/>
    </location>
    <ligand>
        <name>L-methionine</name>
        <dbReference type="ChEBI" id="CHEBI:57844"/>
        <note>ligand shared between two neighboring subunits</note>
    </ligand>
</feature>
<feature type="binding site" description="in other chain" evidence="1">
    <location>
        <position position="100"/>
    </location>
    <ligand>
        <name>L-methionine</name>
        <dbReference type="ChEBI" id="CHEBI:57844"/>
        <note>ligand shared between two neighboring subunits</note>
    </ligand>
</feature>
<feature type="binding site" description="in other chain" evidence="1">
    <location>
        <begin position="165"/>
        <end position="167"/>
    </location>
    <ligand>
        <name>ATP</name>
        <dbReference type="ChEBI" id="CHEBI:30616"/>
        <note>ligand shared between two neighboring subunits</note>
    </ligand>
</feature>
<feature type="binding site" evidence="1">
    <location>
        <position position="240"/>
    </location>
    <ligand>
        <name>ATP</name>
        <dbReference type="ChEBI" id="CHEBI:30616"/>
        <note>ligand shared between two neighboring subunits</note>
    </ligand>
</feature>
<feature type="binding site" evidence="1">
    <location>
        <position position="240"/>
    </location>
    <ligand>
        <name>L-methionine</name>
        <dbReference type="ChEBI" id="CHEBI:57844"/>
        <note>ligand shared between two neighboring subunits</note>
    </ligand>
</feature>
<feature type="binding site" description="in other chain" evidence="1">
    <location>
        <begin position="246"/>
        <end position="247"/>
    </location>
    <ligand>
        <name>ATP</name>
        <dbReference type="ChEBI" id="CHEBI:30616"/>
        <note>ligand shared between two neighboring subunits</note>
    </ligand>
</feature>
<feature type="binding site" evidence="1">
    <location>
        <position position="263"/>
    </location>
    <ligand>
        <name>ATP</name>
        <dbReference type="ChEBI" id="CHEBI:30616"/>
        <note>ligand shared between two neighboring subunits</note>
    </ligand>
</feature>
<feature type="binding site" evidence="1">
    <location>
        <position position="267"/>
    </location>
    <ligand>
        <name>ATP</name>
        <dbReference type="ChEBI" id="CHEBI:30616"/>
        <note>ligand shared between two neighboring subunits</note>
    </ligand>
</feature>
<feature type="binding site" description="in other chain" evidence="1">
    <location>
        <position position="271"/>
    </location>
    <ligand>
        <name>L-methionine</name>
        <dbReference type="ChEBI" id="CHEBI:57844"/>
        <note>ligand shared between two neighboring subunits</note>
    </ligand>
</feature>
<gene>
    <name evidence="1" type="primary">metK</name>
    <name type="ordered locus">PP_4967</name>
</gene>
<accession>Q88D60</accession>
<evidence type="ECO:0000255" key="1">
    <source>
        <dbReference type="HAMAP-Rule" id="MF_00086"/>
    </source>
</evidence>